<reference key="1">
    <citation type="journal article" date="2007" name="Science">
        <title>Legumes symbioses: absence of nod genes in photosynthetic bradyrhizobia.</title>
        <authorList>
            <person name="Giraud E."/>
            <person name="Moulin L."/>
            <person name="Vallenet D."/>
            <person name="Barbe V."/>
            <person name="Cytryn E."/>
            <person name="Avarre J.-C."/>
            <person name="Jaubert M."/>
            <person name="Simon D."/>
            <person name="Cartieaux F."/>
            <person name="Prin Y."/>
            <person name="Bena G."/>
            <person name="Hannibal L."/>
            <person name="Fardoux J."/>
            <person name="Kojadinovic M."/>
            <person name="Vuillet L."/>
            <person name="Lajus A."/>
            <person name="Cruveiller S."/>
            <person name="Rouy Z."/>
            <person name="Mangenot S."/>
            <person name="Segurens B."/>
            <person name="Dossat C."/>
            <person name="Franck W.L."/>
            <person name="Chang W.-S."/>
            <person name="Saunders E."/>
            <person name="Bruce D."/>
            <person name="Richardson P."/>
            <person name="Normand P."/>
            <person name="Dreyfus B."/>
            <person name="Pignol D."/>
            <person name="Stacey G."/>
            <person name="Emerich D."/>
            <person name="Vermeglio A."/>
            <person name="Medigue C."/>
            <person name="Sadowsky M."/>
        </authorList>
    </citation>
    <scope>NUCLEOTIDE SEQUENCE [LARGE SCALE GENOMIC DNA]</scope>
    <source>
        <strain>BTAi1 / ATCC BAA-1182</strain>
    </source>
</reference>
<sequence>MMSDTLRAVLLGIIEGVTEFLPVSSTGHLLLAERFFGLGEDGFWKSFAILIQLGAILAIVALYFFKLSRVAIGALSNADDRRFIIGVLIAFLPAVIIGLIAGKYIKALLFDPWVVCFSLIVGGAILLWVDQIDLKPREHDATRYPLLMYLWIGVAQCLAMIPGVSRSGATIVAAMLLGGDKRSAAEFSFFLAIPTMVGAFVYDFYKSRAEMTSDHLGLVAIGFVVSFITAMIVVKAFLGYVTRHGFVLFAWWRVIVGTLGLIALALGK</sequence>
<evidence type="ECO:0000255" key="1">
    <source>
        <dbReference type="HAMAP-Rule" id="MF_01006"/>
    </source>
</evidence>
<protein>
    <recommendedName>
        <fullName evidence="1">Undecaprenyl-diphosphatase</fullName>
        <ecNumber evidence="1">3.6.1.27</ecNumber>
    </recommendedName>
    <alternativeName>
        <fullName evidence="1">Bacitracin resistance protein</fullName>
    </alternativeName>
    <alternativeName>
        <fullName evidence="1">Undecaprenyl pyrophosphate phosphatase</fullName>
    </alternativeName>
</protein>
<organism>
    <name type="scientific">Bradyrhizobium sp. (strain BTAi1 / ATCC BAA-1182)</name>
    <dbReference type="NCBI Taxonomy" id="288000"/>
    <lineage>
        <taxon>Bacteria</taxon>
        <taxon>Pseudomonadati</taxon>
        <taxon>Pseudomonadota</taxon>
        <taxon>Alphaproteobacteria</taxon>
        <taxon>Hyphomicrobiales</taxon>
        <taxon>Nitrobacteraceae</taxon>
        <taxon>Bradyrhizobium</taxon>
    </lineage>
</organism>
<feature type="chain" id="PRO_0000303020" description="Undecaprenyl-diphosphatase">
    <location>
        <begin position="1"/>
        <end position="268"/>
    </location>
</feature>
<feature type="transmembrane region" description="Helical" evidence="1">
    <location>
        <begin position="47"/>
        <end position="67"/>
    </location>
</feature>
<feature type="transmembrane region" description="Helical" evidence="1">
    <location>
        <begin position="83"/>
        <end position="103"/>
    </location>
</feature>
<feature type="transmembrane region" description="Helical" evidence="1">
    <location>
        <begin position="109"/>
        <end position="129"/>
    </location>
</feature>
<feature type="transmembrane region" description="Helical" evidence="1">
    <location>
        <begin position="144"/>
        <end position="164"/>
    </location>
</feature>
<feature type="transmembrane region" description="Helical" evidence="1">
    <location>
        <begin position="184"/>
        <end position="204"/>
    </location>
</feature>
<feature type="transmembrane region" description="Helical" evidence="1">
    <location>
        <begin position="218"/>
        <end position="238"/>
    </location>
</feature>
<feature type="transmembrane region" description="Helical" evidence="1">
    <location>
        <begin position="246"/>
        <end position="266"/>
    </location>
</feature>
<keyword id="KW-0046">Antibiotic resistance</keyword>
<keyword id="KW-0997">Cell inner membrane</keyword>
<keyword id="KW-1003">Cell membrane</keyword>
<keyword id="KW-0133">Cell shape</keyword>
<keyword id="KW-0961">Cell wall biogenesis/degradation</keyword>
<keyword id="KW-0378">Hydrolase</keyword>
<keyword id="KW-0472">Membrane</keyword>
<keyword id="KW-0573">Peptidoglycan synthesis</keyword>
<keyword id="KW-1185">Reference proteome</keyword>
<keyword id="KW-0812">Transmembrane</keyword>
<keyword id="KW-1133">Transmembrane helix</keyword>
<dbReference type="EC" id="3.6.1.27" evidence="1"/>
<dbReference type="EMBL" id="CP000494">
    <property type="protein sequence ID" value="ABQ32519.1"/>
    <property type="molecule type" value="Genomic_DNA"/>
</dbReference>
<dbReference type="RefSeq" id="WP_012040576.1">
    <property type="nucleotide sequence ID" value="NC_009485.1"/>
</dbReference>
<dbReference type="SMR" id="A5E8M5"/>
<dbReference type="STRING" id="288000.BBta_0223"/>
<dbReference type="KEGG" id="bbt:BBta_0223"/>
<dbReference type="eggNOG" id="COG1968">
    <property type="taxonomic scope" value="Bacteria"/>
</dbReference>
<dbReference type="HOGENOM" id="CLU_060296_2_0_5"/>
<dbReference type="Proteomes" id="UP000000246">
    <property type="component" value="Chromosome"/>
</dbReference>
<dbReference type="GO" id="GO:0005886">
    <property type="term" value="C:plasma membrane"/>
    <property type="evidence" value="ECO:0007669"/>
    <property type="project" value="UniProtKB-SubCell"/>
</dbReference>
<dbReference type="GO" id="GO:0050380">
    <property type="term" value="F:undecaprenyl-diphosphatase activity"/>
    <property type="evidence" value="ECO:0007669"/>
    <property type="project" value="UniProtKB-UniRule"/>
</dbReference>
<dbReference type="GO" id="GO:0071555">
    <property type="term" value="P:cell wall organization"/>
    <property type="evidence" value="ECO:0007669"/>
    <property type="project" value="UniProtKB-KW"/>
</dbReference>
<dbReference type="GO" id="GO:0009252">
    <property type="term" value="P:peptidoglycan biosynthetic process"/>
    <property type="evidence" value="ECO:0007669"/>
    <property type="project" value="UniProtKB-KW"/>
</dbReference>
<dbReference type="GO" id="GO:0008360">
    <property type="term" value="P:regulation of cell shape"/>
    <property type="evidence" value="ECO:0007669"/>
    <property type="project" value="UniProtKB-KW"/>
</dbReference>
<dbReference type="GO" id="GO:0046677">
    <property type="term" value="P:response to antibiotic"/>
    <property type="evidence" value="ECO:0007669"/>
    <property type="project" value="UniProtKB-UniRule"/>
</dbReference>
<dbReference type="HAMAP" id="MF_01006">
    <property type="entry name" value="Undec_diphosphatase"/>
    <property type="match status" value="1"/>
</dbReference>
<dbReference type="InterPro" id="IPR003824">
    <property type="entry name" value="UppP"/>
</dbReference>
<dbReference type="NCBIfam" id="NF001389">
    <property type="entry name" value="PRK00281.1-2"/>
    <property type="match status" value="1"/>
</dbReference>
<dbReference type="NCBIfam" id="NF001390">
    <property type="entry name" value="PRK00281.1-4"/>
    <property type="match status" value="1"/>
</dbReference>
<dbReference type="NCBIfam" id="TIGR00753">
    <property type="entry name" value="undec_PP_bacA"/>
    <property type="match status" value="1"/>
</dbReference>
<dbReference type="PANTHER" id="PTHR30622">
    <property type="entry name" value="UNDECAPRENYL-DIPHOSPHATASE"/>
    <property type="match status" value="1"/>
</dbReference>
<dbReference type="PANTHER" id="PTHR30622:SF3">
    <property type="entry name" value="UNDECAPRENYL-DIPHOSPHATASE"/>
    <property type="match status" value="1"/>
</dbReference>
<dbReference type="Pfam" id="PF02673">
    <property type="entry name" value="BacA"/>
    <property type="match status" value="1"/>
</dbReference>
<accession>A5E8M5</accession>
<gene>
    <name evidence="1" type="primary">uppP</name>
    <name type="ordered locus">BBta_0223</name>
</gene>
<proteinExistence type="inferred from homology"/>
<comment type="function">
    <text evidence="1">Catalyzes the dephosphorylation of undecaprenyl diphosphate (UPP). Confers resistance to bacitracin.</text>
</comment>
<comment type="catalytic activity">
    <reaction evidence="1">
        <text>di-trans,octa-cis-undecaprenyl diphosphate + H2O = di-trans,octa-cis-undecaprenyl phosphate + phosphate + H(+)</text>
        <dbReference type="Rhea" id="RHEA:28094"/>
        <dbReference type="ChEBI" id="CHEBI:15377"/>
        <dbReference type="ChEBI" id="CHEBI:15378"/>
        <dbReference type="ChEBI" id="CHEBI:43474"/>
        <dbReference type="ChEBI" id="CHEBI:58405"/>
        <dbReference type="ChEBI" id="CHEBI:60392"/>
        <dbReference type="EC" id="3.6.1.27"/>
    </reaction>
</comment>
<comment type="subcellular location">
    <subcellularLocation>
        <location evidence="1">Cell inner membrane</location>
        <topology evidence="1">Multi-pass membrane protein</topology>
    </subcellularLocation>
</comment>
<comment type="miscellaneous">
    <text>Bacitracin is thought to be involved in the inhibition of peptidoglycan synthesis by sequestering undecaprenyl diphosphate, thereby reducing the pool of lipid carrier available.</text>
</comment>
<comment type="similarity">
    <text evidence="1">Belongs to the UppP family.</text>
</comment>
<name>UPPP_BRASB</name>